<sequence length="198" mass="21203">MSDAWLVVGLGNPGAEYERTRHNVGQMVLDELASRTRGSFKRHRTGARTAEVRLGVAPGGAPGPRVVLAAPTSYMNVSGGPVAGLAKYFDVDVEHLVVVHDELDVPFGSVRLKRGGGEGGHNGLRSISKSLGDKDYARVRVGIGRPPGRQDPADFVLKEFSSTEKKDMPFLVMDAADAVEELVIKGFEAAQQKFHAPA</sequence>
<proteinExistence type="inferred from homology"/>
<comment type="function">
    <text evidence="1">Hydrolyzes ribosome-free peptidyl-tRNAs (with 1 or more amino acids incorporated), which drop off the ribosome during protein synthesis, or as a result of ribosome stalling.</text>
</comment>
<comment type="function">
    <text evidence="1">Catalyzes the release of premature peptidyl moieties from peptidyl-tRNA molecules trapped in stalled 50S ribosomal subunits, and thus maintains levels of free tRNAs and 50S ribosomes.</text>
</comment>
<comment type="catalytic activity">
    <reaction evidence="1">
        <text>an N-acyl-L-alpha-aminoacyl-tRNA + H2O = an N-acyl-L-amino acid + a tRNA + H(+)</text>
        <dbReference type="Rhea" id="RHEA:54448"/>
        <dbReference type="Rhea" id="RHEA-COMP:10123"/>
        <dbReference type="Rhea" id="RHEA-COMP:13883"/>
        <dbReference type="ChEBI" id="CHEBI:15377"/>
        <dbReference type="ChEBI" id="CHEBI:15378"/>
        <dbReference type="ChEBI" id="CHEBI:59874"/>
        <dbReference type="ChEBI" id="CHEBI:78442"/>
        <dbReference type="ChEBI" id="CHEBI:138191"/>
        <dbReference type="EC" id="3.1.1.29"/>
    </reaction>
</comment>
<comment type="subunit">
    <text evidence="1">Monomer.</text>
</comment>
<comment type="subcellular location">
    <subcellularLocation>
        <location evidence="1">Cytoplasm</location>
    </subcellularLocation>
</comment>
<comment type="similarity">
    <text evidence="1">Belongs to the PTH family.</text>
</comment>
<protein>
    <recommendedName>
        <fullName evidence="1">Peptidyl-tRNA hydrolase</fullName>
        <shortName evidence="1">Pth</shortName>
        <ecNumber evidence="1">3.1.1.29</ecNumber>
    </recommendedName>
</protein>
<keyword id="KW-0963">Cytoplasm</keyword>
<keyword id="KW-0378">Hydrolase</keyword>
<keyword id="KW-1185">Reference proteome</keyword>
<keyword id="KW-0694">RNA-binding</keyword>
<keyword id="KW-0820">tRNA-binding</keyword>
<evidence type="ECO:0000255" key="1">
    <source>
        <dbReference type="HAMAP-Rule" id="MF_00083"/>
    </source>
</evidence>
<gene>
    <name evidence="1" type="primary">pth</name>
    <name type="ordered locus">Krad_1054</name>
</gene>
<name>PTH_KINRD</name>
<reference key="1">
    <citation type="journal article" date="2008" name="PLoS ONE">
        <title>Survival in nuclear waste, extreme resistance, and potential applications gleaned from the genome sequence of Kineococcus radiotolerans SRS30216.</title>
        <authorList>
            <person name="Bagwell C.E."/>
            <person name="Bhat S."/>
            <person name="Hawkins G.M."/>
            <person name="Smith B.W."/>
            <person name="Biswas T."/>
            <person name="Hoover T.R."/>
            <person name="Saunders E."/>
            <person name="Han C.S."/>
            <person name="Tsodikov O.V."/>
            <person name="Shimkets L.J."/>
        </authorList>
    </citation>
    <scope>NUCLEOTIDE SEQUENCE [LARGE SCALE GENOMIC DNA]</scope>
    <source>
        <strain>ATCC BAA-149 / DSM 14245 / SRS30216</strain>
    </source>
</reference>
<feature type="chain" id="PRO_1000075345" description="Peptidyl-tRNA hydrolase">
    <location>
        <begin position="1"/>
        <end position="198"/>
    </location>
</feature>
<feature type="active site" description="Proton acceptor" evidence="1">
    <location>
        <position position="22"/>
    </location>
</feature>
<feature type="binding site" evidence="1">
    <location>
        <position position="17"/>
    </location>
    <ligand>
        <name>tRNA</name>
        <dbReference type="ChEBI" id="CHEBI:17843"/>
    </ligand>
</feature>
<feature type="binding site" evidence="1">
    <location>
        <position position="74"/>
    </location>
    <ligand>
        <name>tRNA</name>
        <dbReference type="ChEBI" id="CHEBI:17843"/>
    </ligand>
</feature>
<feature type="binding site" evidence="1">
    <location>
        <position position="76"/>
    </location>
    <ligand>
        <name>tRNA</name>
        <dbReference type="ChEBI" id="CHEBI:17843"/>
    </ligand>
</feature>
<feature type="binding site" evidence="1">
    <location>
        <position position="122"/>
    </location>
    <ligand>
        <name>tRNA</name>
        <dbReference type="ChEBI" id="CHEBI:17843"/>
    </ligand>
</feature>
<feature type="site" description="Discriminates between blocked and unblocked aminoacyl-tRNA" evidence="1">
    <location>
        <position position="12"/>
    </location>
</feature>
<feature type="site" description="Stabilizes the basic form of H active site to accept a proton" evidence="1">
    <location>
        <position position="101"/>
    </location>
</feature>
<dbReference type="EC" id="3.1.1.29" evidence="1"/>
<dbReference type="EMBL" id="CP000750">
    <property type="protein sequence ID" value="ABS02542.1"/>
    <property type="molecule type" value="Genomic_DNA"/>
</dbReference>
<dbReference type="RefSeq" id="WP_012084606.1">
    <property type="nucleotide sequence ID" value="NC_009664.2"/>
</dbReference>
<dbReference type="SMR" id="A6W6V3"/>
<dbReference type="STRING" id="266940.Krad_1054"/>
<dbReference type="KEGG" id="kra:Krad_1054"/>
<dbReference type="eggNOG" id="COG0193">
    <property type="taxonomic scope" value="Bacteria"/>
</dbReference>
<dbReference type="HOGENOM" id="CLU_062456_2_2_11"/>
<dbReference type="OrthoDB" id="9800507at2"/>
<dbReference type="Proteomes" id="UP000001116">
    <property type="component" value="Chromosome"/>
</dbReference>
<dbReference type="GO" id="GO:0005737">
    <property type="term" value="C:cytoplasm"/>
    <property type="evidence" value="ECO:0007669"/>
    <property type="project" value="UniProtKB-SubCell"/>
</dbReference>
<dbReference type="GO" id="GO:0004045">
    <property type="term" value="F:peptidyl-tRNA hydrolase activity"/>
    <property type="evidence" value="ECO:0007669"/>
    <property type="project" value="UniProtKB-UniRule"/>
</dbReference>
<dbReference type="GO" id="GO:0000049">
    <property type="term" value="F:tRNA binding"/>
    <property type="evidence" value="ECO:0007669"/>
    <property type="project" value="UniProtKB-UniRule"/>
</dbReference>
<dbReference type="GO" id="GO:0006515">
    <property type="term" value="P:protein quality control for misfolded or incompletely synthesized proteins"/>
    <property type="evidence" value="ECO:0007669"/>
    <property type="project" value="UniProtKB-UniRule"/>
</dbReference>
<dbReference type="GO" id="GO:0072344">
    <property type="term" value="P:rescue of stalled ribosome"/>
    <property type="evidence" value="ECO:0007669"/>
    <property type="project" value="UniProtKB-UniRule"/>
</dbReference>
<dbReference type="CDD" id="cd00462">
    <property type="entry name" value="PTH"/>
    <property type="match status" value="1"/>
</dbReference>
<dbReference type="FunFam" id="3.40.50.1470:FF:000001">
    <property type="entry name" value="Peptidyl-tRNA hydrolase"/>
    <property type="match status" value="1"/>
</dbReference>
<dbReference type="Gene3D" id="3.40.50.1470">
    <property type="entry name" value="Peptidyl-tRNA hydrolase"/>
    <property type="match status" value="1"/>
</dbReference>
<dbReference type="HAMAP" id="MF_00083">
    <property type="entry name" value="Pept_tRNA_hydro_bact"/>
    <property type="match status" value="1"/>
</dbReference>
<dbReference type="InterPro" id="IPR001328">
    <property type="entry name" value="Pept_tRNA_hydro"/>
</dbReference>
<dbReference type="InterPro" id="IPR018171">
    <property type="entry name" value="Pept_tRNA_hydro_CS"/>
</dbReference>
<dbReference type="InterPro" id="IPR036416">
    <property type="entry name" value="Pept_tRNA_hydro_sf"/>
</dbReference>
<dbReference type="NCBIfam" id="TIGR00447">
    <property type="entry name" value="pth"/>
    <property type="match status" value="1"/>
</dbReference>
<dbReference type="PANTHER" id="PTHR17224">
    <property type="entry name" value="PEPTIDYL-TRNA HYDROLASE"/>
    <property type="match status" value="1"/>
</dbReference>
<dbReference type="PANTHER" id="PTHR17224:SF1">
    <property type="entry name" value="PEPTIDYL-TRNA HYDROLASE"/>
    <property type="match status" value="1"/>
</dbReference>
<dbReference type="Pfam" id="PF01195">
    <property type="entry name" value="Pept_tRNA_hydro"/>
    <property type="match status" value="1"/>
</dbReference>
<dbReference type="SUPFAM" id="SSF53178">
    <property type="entry name" value="Peptidyl-tRNA hydrolase-like"/>
    <property type="match status" value="1"/>
</dbReference>
<dbReference type="PROSITE" id="PS01195">
    <property type="entry name" value="PEPT_TRNA_HYDROL_1"/>
    <property type="match status" value="1"/>
</dbReference>
<dbReference type="PROSITE" id="PS01196">
    <property type="entry name" value="PEPT_TRNA_HYDROL_2"/>
    <property type="match status" value="1"/>
</dbReference>
<organism>
    <name type="scientific">Kineococcus radiotolerans (strain ATCC BAA-149 / DSM 14245 / SRS30216)</name>
    <dbReference type="NCBI Taxonomy" id="266940"/>
    <lineage>
        <taxon>Bacteria</taxon>
        <taxon>Bacillati</taxon>
        <taxon>Actinomycetota</taxon>
        <taxon>Actinomycetes</taxon>
        <taxon>Kineosporiales</taxon>
        <taxon>Kineosporiaceae</taxon>
        <taxon>Kineococcus</taxon>
    </lineage>
</organism>
<accession>A6W6V3</accession>